<comment type="function">
    <text evidence="1">Protein involved in mitophagy (By similarity). Accumulates on the mitochondria surface in response to mitochondrial depolarization and acts as a 'eat me' signal by recruiting proteins involved in selective autophagy (By similarity).</text>
</comment>
<comment type="subcellular location">
    <subcellularLocation>
        <location evidence="1">Mitochondrion matrix</location>
    </subcellularLocation>
</comment>
<comment type="similarity">
    <text evidence="3">Belongs to the NipSnap family.</text>
</comment>
<sequence>MATRVLHSSCSGLYRAAGPARGKGHATAVIRSLSASHNRPREDSWFKSLFVRKVDPRKDAHSHLLAKKEDNNLYKIQFHNVKPECLEAYNKLCEDVLTNIHTDKAYPCELVGTWNTWYGEQDQAVHLWRYRGGYPALTEVMSKLKNNKEFLEYRSERGKMLLSRRNQLLLEFSFWNEPVPRDGPNIYELRSYQLRPGTMIEWGNYWARAIGYRQHNREAVGGFFSQIGDLYMVHHLWAYKDLQSREDTRNAAWQHEGWDEVVYYTVPLIQHMESRIMIPLKNSPLK</sequence>
<name>NIPS2_DANRE</name>
<keyword id="KW-0072">Autophagy</keyword>
<keyword id="KW-0496">Mitochondrion</keyword>
<keyword id="KW-1185">Reference proteome</keyword>
<keyword id="KW-0809">Transit peptide</keyword>
<evidence type="ECO:0000250" key="1">
    <source>
        <dbReference type="UniProtKB" id="O75323"/>
    </source>
</evidence>
<evidence type="ECO:0000255" key="2"/>
<evidence type="ECO:0000305" key="3"/>
<organism>
    <name type="scientific">Danio rerio</name>
    <name type="common">Zebrafish</name>
    <name type="synonym">Brachydanio rerio</name>
    <dbReference type="NCBI Taxonomy" id="7955"/>
    <lineage>
        <taxon>Eukaryota</taxon>
        <taxon>Metazoa</taxon>
        <taxon>Chordata</taxon>
        <taxon>Craniata</taxon>
        <taxon>Vertebrata</taxon>
        <taxon>Euteleostomi</taxon>
        <taxon>Actinopterygii</taxon>
        <taxon>Neopterygii</taxon>
        <taxon>Teleostei</taxon>
        <taxon>Ostariophysi</taxon>
        <taxon>Cypriniformes</taxon>
        <taxon>Danionidae</taxon>
        <taxon>Danioninae</taxon>
        <taxon>Danio</taxon>
    </lineage>
</organism>
<proteinExistence type="evidence at transcript level"/>
<feature type="transit peptide" description="Mitochondrion" evidence="2">
    <location>
        <begin position="1"/>
        <end position="40"/>
    </location>
</feature>
<feature type="chain" id="PRO_0000221150" description="Protein NipSnap homolog 2" evidence="2">
    <location>
        <begin position="41"/>
        <end position="286"/>
    </location>
</feature>
<feature type="sequence conflict" description="In Ref. 1; CAB56702." evidence="3" ref="1">
    <original>M</original>
    <variation>S</variation>
    <location>
        <position position="1"/>
    </location>
</feature>
<feature type="sequence conflict" description="In Ref. 1; CAB56702." evidence="3" ref="1">
    <original>P</original>
    <variation>T</variation>
    <location>
        <position position="107"/>
    </location>
</feature>
<feature type="sequence conflict" description="In Ref. 1; CAB56702." evidence="3" ref="1">
    <original>W</original>
    <variation>L</variation>
    <location>
        <position position="237"/>
    </location>
</feature>
<protein>
    <recommendedName>
        <fullName>Protein NipSnap homolog 2</fullName>
        <shortName>NipSnap2</shortName>
    </recommendedName>
    <alternativeName>
        <fullName>Glioblastoma-amplified sequence</fullName>
    </alternativeName>
</protein>
<reference key="1">
    <citation type="submission" date="1999-09" db="EMBL/GenBank/DDBJ databases">
        <title>Cloning of NIPSNAP gene orthologues in Danio rerio and Drosophila melanogaster.</title>
        <authorList>
            <person name="Kedra D."/>
            <person name="Dumanski J.P."/>
        </authorList>
    </citation>
    <scope>NUCLEOTIDE SEQUENCE [MRNA]</scope>
</reference>
<reference key="2">
    <citation type="submission" date="2004-09" db="EMBL/GenBank/DDBJ databases">
        <authorList>
            <consortium name="NIH - Zebrafish Gene Collection (ZGC) project"/>
        </authorList>
    </citation>
    <scope>NUCLEOTIDE SEQUENCE [LARGE SCALE MRNA]</scope>
</reference>
<dbReference type="EMBL" id="AJ249797">
    <property type="protein sequence ID" value="CAB56702.1"/>
    <property type="molecule type" value="mRNA"/>
</dbReference>
<dbReference type="EMBL" id="BC081660">
    <property type="protein sequence ID" value="AAH81660.1"/>
    <property type="molecule type" value="mRNA"/>
</dbReference>
<dbReference type="RefSeq" id="NP_571109.1">
    <property type="nucleotide sequence ID" value="NM_131034.1"/>
</dbReference>
<dbReference type="SMR" id="Q9PU58"/>
<dbReference type="FunCoup" id="Q9PU58">
    <property type="interactions" value="2394"/>
</dbReference>
<dbReference type="IntAct" id="Q9PU58">
    <property type="interactions" value="1"/>
</dbReference>
<dbReference type="MINT" id="Q9PU58"/>
<dbReference type="PaxDb" id="7955-ENSDARP00000106906"/>
<dbReference type="DNASU" id="30232"/>
<dbReference type="GeneID" id="30232"/>
<dbReference type="KEGG" id="dre:30232"/>
<dbReference type="AGR" id="ZFIN:ZDB-GENE-991008-18"/>
<dbReference type="CTD" id="2631"/>
<dbReference type="ZFIN" id="ZDB-GENE-991008-18">
    <property type="gene designation" value="nipsnap2"/>
</dbReference>
<dbReference type="eggNOG" id="KOG2883">
    <property type="taxonomic scope" value="Eukaryota"/>
</dbReference>
<dbReference type="HOGENOM" id="CLU_053393_1_0_1"/>
<dbReference type="InParanoid" id="Q9PU58"/>
<dbReference type="OrthoDB" id="10262843at2759"/>
<dbReference type="PhylomeDB" id="Q9PU58"/>
<dbReference type="TreeFam" id="TF314501"/>
<dbReference type="PRO" id="PR:Q9PU58"/>
<dbReference type="Proteomes" id="UP000000437">
    <property type="component" value="Chromosome 15"/>
</dbReference>
<dbReference type="GO" id="GO:0005737">
    <property type="term" value="C:cytoplasm"/>
    <property type="evidence" value="ECO:0000250"/>
    <property type="project" value="UniProtKB"/>
</dbReference>
<dbReference type="GO" id="GO:0005759">
    <property type="term" value="C:mitochondrial matrix"/>
    <property type="evidence" value="ECO:0000250"/>
    <property type="project" value="UniProtKB"/>
</dbReference>
<dbReference type="GO" id="GO:0005739">
    <property type="term" value="C:mitochondrion"/>
    <property type="evidence" value="ECO:0000250"/>
    <property type="project" value="UniProtKB"/>
</dbReference>
<dbReference type="GO" id="GO:0030674">
    <property type="term" value="F:protein-macromolecule adaptor activity"/>
    <property type="evidence" value="ECO:0000250"/>
    <property type="project" value="UniProtKB"/>
</dbReference>
<dbReference type="GO" id="GO:0000423">
    <property type="term" value="P:mitophagy"/>
    <property type="evidence" value="ECO:0000250"/>
    <property type="project" value="UniProtKB"/>
</dbReference>
<dbReference type="FunFam" id="3.30.70.100:FF:000003">
    <property type="entry name" value="Protein NipSnap homolog 2"/>
    <property type="match status" value="1"/>
</dbReference>
<dbReference type="FunFam" id="3.30.70.100:FF:000007">
    <property type="entry name" value="protein NipSnap homolog 2"/>
    <property type="match status" value="1"/>
</dbReference>
<dbReference type="Gene3D" id="3.30.70.100">
    <property type="match status" value="2"/>
</dbReference>
<dbReference type="InterPro" id="IPR011008">
    <property type="entry name" value="Dimeric_a/b-barrel"/>
</dbReference>
<dbReference type="InterPro" id="IPR012577">
    <property type="entry name" value="NIPSNAP"/>
</dbReference>
<dbReference type="InterPro" id="IPR051557">
    <property type="entry name" value="NipSnap_domain"/>
</dbReference>
<dbReference type="PANTHER" id="PTHR21017">
    <property type="entry name" value="NIPSNAP-RELATED"/>
    <property type="match status" value="1"/>
</dbReference>
<dbReference type="PANTHER" id="PTHR21017:SF14">
    <property type="entry name" value="PROTEIN NIPSNAP HOMOLOG 2"/>
    <property type="match status" value="1"/>
</dbReference>
<dbReference type="Pfam" id="PF07978">
    <property type="entry name" value="NIPSNAP"/>
    <property type="match status" value="1"/>
</dbReference>
<dbReference type="SUPFAM" id="SSF54909">
    <property type="entry name" value="Dimeric alpha+beta barrel"/>
    <property type="match status" value="2"/>
</dbReference>
<accession>Q9PU58</accession>
<accession>Q642H4</accession>
<gene>
    <name type="primary">nipsnap2</name>
    <name type="synonym">gbas</name>
</gene>